<proteinExistence type="inferred from homology"/>
<protein>
    <recommendedName>
        <fullName>Monopolar spindle protein 2</fullName>
    </recommendedName>
</protein>
<evidence type="ECO:0000250" key="1"/>
<evidence type="ECO:0000255" key="2"/>
<evidence type="ECO:0000305" key="3"/>
<feature type="chain" id="PRO_0000409156" description="Monopolar spindle protein 2">
    <location>
        <begin position="1"/>
        <end position="356"/>
    </location>
</feature>
<feature type="transmembrane region" description="Helical" evidence="2">
    <location>
        <begin position="285"/>
        <end position="305"/>
    </location>
</feature>
<feature type="coiled-coil region" evidence="2">
    <location>
        <begin position="165"/>
        <end position="264"/>
    </location>
</feature>
<accession>Q6FS52</accession>
<reference key="1">
    <citation type="journal article" date="2004" name="Nature">
        <title>Genome evolution in yeasts.</title>
        <authorList>
            <person name="Dujon B."/>
            <person name="Sherman D."/>
            <person name="Fischer G."/>
            <person name="Durrens P."/>
            <person name="Casaregola S."/>
            <person name="Lafontaine I."/>
            <person name="de Montigny J."/>
            <person name="Marck C."/>
            <person name="Neuveglise C."/>
            <person name="Talla E."/>
            <person name="Goffard N."/>
            <person name="Frangeul L."/>
            <person name="Aigle M."/>
            <person name="Anthouard V."/>
            <person name="Babour A."/>
            <person name="Barbe V."/>
            <person name="Barnay S."/>
            <person name="Blanchin S."/>
            <person name="Beckerich J.-M."/>
            <person name="Beyne E."/>
            <person name="Bleykasten C."/>
            <person name="Boisrame A."/>
            <person name="Boyer J."/>
            <person name="Cattolico L."/>
            <person name="Confanioleri F."/>
            <person name="de Daruvar A."/>
            <person name="Despons L."/>
            <person name="Fabre E."/>
            <person name="Fairhead C."/>
            <person name="Ferry-Dumazet H."/>
            <person name="Groppi A."/>
            <person name="Hantraye F."/>
            <person name="Hennequin C."/>
            <person name="Jauniaux N."/>
            <person name="Joyet P."/>
            <person name="Kachouri R."/>
            <person name="Kerrest A."/>
            <person name="Koszul R."/>
            <person name="Lemaire M."/>
            <person name="Lesur I."/>
            <person name="Ma L."/>
            <person name="Muller H."/>
            <person name="Nicaud J.-M."/>
            <person name="Nikolski M."/>
            <person name="Oztas S."/>
            <person name="Ozier-Kalogeropoulos O."/>
            <person name="Pellenz S."/>
            <person name="Potier S."/>
            <person name="Richard G.-F."/>
            <person name="Straub M.-L."/>
            <person name="Suleau A."/>
            <person name="Swennen D."/>
            <person name="Tekaia F."/>
            <person name="Wesolowski-Louvel M."/>
            <person name="Westhof E."/>
            <person name="Wirth B."/>
            <person name="Zeniou-Meyer M."/>
            <person name="Zivanovic Y."/>
            <person name="Bolotin-Fukuhara M."/>
            <person name="Thierry A."/>
            <person name="Bouchier C."/>
            <person name="Caudron B."/>
            <person name="Scarpelli C."/>
            <person name="Gaillardin C."/>
            <person name="Weissenbach J."/>
            <person name="Wincker P."/>
            <person name="Souciet J.-L."/>
        </authorList>
    </citation>
    <scope>NUCLEOTIDE SEQUENCE [LARGE SCALE GENOMIC DNA]</scope>
    <source>
        <strain>ATCC 2001 / BCRC 20586 / JCM 3761 / NBRC 0622 / NRRL Y-65 / CBS 138</strain>
    </source>
</reference>
<keyword id="KW-0175">Coiled coil</keyword>
<keyword id="KW-0963">Cytoplasm</keyword>
<keyword id="KW-0206">Cytoskeleton</keyword>
<keyword id="KW-0472">Membrane</keyword>
<keyword id="KW-0539">Nucleus</keyword>
<keyword id="KW-1185">Reference proteome</keyword>
<keyword id="KW-0812">Transmembrane</keyword>
<keyword id="KW-1133">Transmembrane helix</keyword>
<organism>
    <name type="scientific">Candida glabrata (strain ATCC 2001 / BCRC 20586 / JCM 3761 / NBRC 0622 / NRRL Y-65 / CBS 138)</name>
    <name type="common">Yeast</name>
    <name type="synonym">Nakaseomyces glabratus</name>
    <dbReference type="NCBI Taxonomy" id="284593"/>
    <lineage>
        <taxon>Eukaryota</taxon>
        <taxon>Fungi</taxon>
        <taxon>Dikarya</taxon>
        <taxon>Ascomycota</taxon>
        <taxon>Saccharomycotina</taxon>
        <taxon>Saccharomycetes</taxon>
        <taxon>Saccharomycetales</taxon>
        <taxon>Saccharomycetaceae</taxon>
        <taxon>Nakaseomyces</taxon>
    </lineage>
</organism>
<name>MPS2_CANGA</name>
<dbReference type="EMBL" id="CR380954">
    <property type="protein sequence ID" value="CAG59875.1"/>
    <property type="molecule type" value="Genomic_DNA"/>
</dbReference>
<dbReference type="RefSeq" id="XP_446942.1">
    <property type="nucleotide sequence ID" value="XM_446942.1"/>
</dbReference>
<dbReference type="SMR" id="Q6FS52"/>
<dbReference type="FunCoup" id="Q6FS52">
    <property type="interactions" value="163"/>
</dbReference>
<dbReference type="STRING" id="284593.Q6FS52"/>
<dbReference type="EnsemblFungi" id="CAGL0H03421g-T">
    <property type="protein sequence ID" value="CAGL0H03421g-T-p1"/>
    <property type="gene ID" value="CAGL0H03421g"/>
</dbReference>
<dbReference type="KEGG" id="cgr:2888827"/>
<dbReference type="CGD" id="CAL0131886">
    <property type="gene designation" value="CAGL0H03421g"/>
</dbReference>
<dbReference type="VEuPathDB" id="FungiDB:CAGL0H03421g"/>
<dbReference type="eggNOG" id="ENOG502RYE7">
    <property type="taxonomic scope" value="Eukaryota"/>
</dbReference>
<dbReference type="HOGENOM" id="CLU_069890_0_0_1"/>
<dbReference type="InParanoid" id="Q6FS52"/>
<dbReference type="OMA" id="FIYAKDF"/>
<dbReference type="Proteomes" id="UP000002428">
    <property type="component" value="Chromosome H"/>
</dbReference>
<dbReference type="GO" id="GO:0005737">
    <property type="term" value="C:cytoplasm"/>
    <property type="evidence" value="ECO:0007669"/>
    <property type="project" value="UniProtKB-KW"/>
</dbReference>
<dbReference type="GO" id="GO:0031965">
    <property type="term" value="C:nuclear membrane"/>
    <property type="evidence" value="ECO:0007669"/>
    <property type="project" value="UniProtKB-SubCell"/>
</dbReference>
<dbReference type="GO" id="GO:0005816">
    <property type="term" value="C:spindle pole body"/>
    <property type="evidence" value="ECO:0007669"/>
    <property type="project" value="UniProtKB-SubCell"/>
</dbReference>
<dbReference type="GO" id="GO:0071988">
    <property type="term" value="P:protein localization to spindle pole body"/>
    <property type="evidence" value="ECO:0007669"/>
    <property type="project" value="InterPro"/>
</dbReference>
<dbReference type="GO" id="GO:0030474">
    <property type="term" value="P:spindle pole body duplication"/>
    <property type="evidence" value="ECO:0007669"/>
    <property type="project" value="InterPro"/>
</dbReference>
<dbReference type="InterPro" id="IPR031433">
    <property type="entry name" value="Mps2"/>
</dbReference>
<dbReference type="Pfam" id="PF17060">
    <property type="entry name" value="MPS2"/>
    <property type="match status" value="1"/>
</dbReference>
<sequence>MSEVDVPELLFERVWLQVDRDRDGFIYAKQMPSFITQCEQVIKDTVNTNKTDFHMTRFKNRLKLPLLPKLHMDLIDAFAKETPYYKIYKESFSDMLNKLTGNNFSTVINKIFEDCDGFPASFISALEVKADVKSSPRSKADSLGSPIKVDLLRNLKPQEEPETPRRINRKYKSLELQLESMKRELEDKEKTIMNNERNLTELRSTISKLKEKYDLLSEEYEQRHIHGGNNGTAIKHDVVIGELKSRLQEQNRLIRILQEQIQFDPQLKRETRVHDNKSKNNTFNGAIAYVIPFLLFIFVIRSLITKEDIGDATMALPWWERNNLASRLAWYFRDVFSNDSAKFLESDAYDKVFGIH</sequence>
<gene>
    <name type="primary">MPS2</name>
    <name type="ordered locus">CAGL0H03421g</name>
</gene>
<comment type="function">
    <text evidence="1">Component of the spindle pole body (SPB) required for insertion of the nascent SPB into the nuclear envelope and for the proper execution of spindle pole body (SPB) duplication.</text>
</comment>
<comment type="subcellular location">
    <subcellularLocation>
        <location evidence="1">Nucleus membrane</location>
        <topology evidence="1">Single-pass membrane protein</topology>
    </subcellularLocation>
    <subcellularLocation>
        <location evidence="1">Cytoplasm</location>
        <location evidence="1">Cytoskeleton</location>
        <location evidence="1">Microtubule organizing center</location>
        <location evidence="1">Spindle pole body</location>
    </subcellularLocation>
</comment>
<comment type="similarity">
    <text evidence="3">Belongs to the MPS2 family.</text>
</comment>